<reference key="1">
    <citation type="journal article" date="2009" name="PLoS Genet.">
        <title>Organised genome dynamics in the Escherichia coli species results in highly diverse adaptive paths.</title>
        <authorList>
            <person name="Touchon M."/>
            <person name="Hoede C."/>
            <person name="Tenaillon O."/>
            <person name="Barbe V."/>
            <person name="Baeriswyl S."/>
            <person name="Bidet P."/>
            <person name="Bingen E."/>
            <person name="Bonacorsi S."/>
            <person name="Bouchier C."/>
            <person name="Bouvet O."/>
            <person name="Calteau A."/>
            <person name="Chiapello H."/>
            <person name="Clermont O."/>
            <person name="Cruveiller S."/>
            <person name="Danchin A."/>
            <person name="Diard M."/>
            <person name="Dossat C."/>
            <person name="Karoui M.E."/>
            <person name="Frapy E."/>
            <person name="Garry L."/>
            <person name="Ghigo J.M."/>
            <person name="Gilles A.M."/>
            <person name="Johnson J."/>
            <person name="Le Bouguenec C."/>
            <person name="Lescat M."/>
            <person name="Mangenot S."/>
            <person name="Martinez-Jehanne V."/>
            <person name="Matic I."/>
            <person name="Nassif X."/>
            <person name="Oztas S."/>
            <person name="Petit M.A."/>
            <person name="Pichon C."/>
            <person name="Rouy Z."/>
            <person name="Ruf C.S."/>
            <person name="Schneider D."/>
            <person name="Tourret J."/>
            <person name="Vacherie B."/>
            <person name="Vallenet D."/>
            <person name="Medigue C."/>
            <person name="Rocha E.P.C."/>
            <person name="Denamur E."/>
        </authorList>
    </citation>
    <scope>NUCLEOTIDE SEQUENCE [LARGE SCALE GENOMIC DNA]</scope>
    <source>
        <strain>55989 / EAEC</strain>
    </source>
</reference>
<comment type="function">
    <text evidence="1">Excises uracil residues from the DNA which can arise as a result of misincorporation of dUMP residues by DNA polymerase or due to deamination of cytosine.</text>
</comment>
<comment type="catalytic activity">
    <reaction evidence="1">
        <text>Hydrolyzes single-stranded DNA or mismatched double-stranded DNA and polynucleotides, releasing free uracil.</text>
        <dbReference type="EC" id="3.2.2.27"/>
    </reaction>
</comment>
<comment type="subcellular location">
    <subcellularLocation>
        <location evidence="1">Cytoplasm</location>
    </subcellularLocation>
</comment>
<comment type="similarity">
    <text evidence="1">Belongs to the uracil-DNA glycosylase (UDG) superfamily. UNG family.</text>
</comment>
<organism>
    <name type="scientific">Escherichia coli (strain 55989 / EAEC)</name>
    <dbReference type="NCBI Taxonomy" id="585055"/>
    <lineage>
        <taxon>Bacteria</taxon>
        <taxon>Pseudomonadati</taxon>
        <taxon>Pseudomonadota</taxon>
        <taxon>Gammaproteobacteria</taxon>
        <taxon>Enterobacterales</taxon>
        <taxon>Enterobacteriaceae</taxon>
        <taxon>Escherichia</taxon>
    </lineage>
</organism>
<gene>
    <name evidence="1" type="primary">ung</name>
    <name type="ordered locus">EC55989_2869</name>
</gene>
<accession>B7LDH3</accession>
<sequence length="229" mass="25693">MANELTWHDVLAEEKQQPYFLNTLQTVASERQSGVTIYPPQKDVFNAFRFTELGDVKVVILGQDPYHGPGQAHGLAFSVRPGIAIPPSLLNMYKELENTIPGFTRPNHGYLESWARQGVLLLNTVLTVRAGQAHSHASLGWETFTDKVISLINQHREGVVFLLWGSHAQKKGAIIDKQRHHVLKAPHPSPLSAHRGFFGCNHFVLANQWLEQRGETPIDWMPVLPAESE</sequence>
<keyword id="KW-0963">Cytoplasm</keyword>
<keyword id="KW-0227">DNA damage</keyword>
<keyword id="KW-0234">DNA repair</keyword>
<keyword id="KW-0378">Hydrolase</keyword>
<keyword id="KW-1185">Reference proteome</keyword>
<name>UNG_ECO55</name>
<proteinExistence type="inferred from homology"/>
<protein>
    <recommendedName>
        <fullName evidence="1">Uracil-DNA glycosylase</fullName>
        <shortName evidence="1">UDG</shortName>
        <ecNumber evidence="1">3.2.2.27</ecNumber>
    </recommendedName>
</protein>
<dbReference type="EC" id="3.2.2.27" evidence="1"/>
<dbReference type="EMBL" id="CU928145">
    <property type="protein sequence ID" value="CAU98739.1"/>
    <property type="molecule type" value="Genomic_DNA"/>
</dbReference>
<dbReference type="RefSeq" id="WP_001262716.1">
    <property type="nucleotide sequence ID" value="NC_011748.1"/>
</dbReference>
<dbReference type="SMR" id="B7LDH3"/>
<dbReference type="GeneID" id="93774506"/>
<dbReference type="KEGG" id="eck:EC55989_2869"/>
<dbReference type="HOGENOM" id="CLU_032162_3_1_6"/>
<dbReference type="Proteomes" id="UP000000746">
    <property type="component" value="Chromosome"/>
</dbReference>
<dbReference type="GO" id="GO:0005737">
    <property type="term" value="C:cytoplasm"/>
    <property type="evidence" value="ECO:0007669"/>
    <property type="project" value="UniProtKB-SubCell"/>
</dbReference>
<dbReference type="GO" id="GO:0004844">
    <property type="term" value="F:uracil DNA N-glycosylase activity"/>
    <property type="evidence" value="ECO:0007669"/>
    <property type="project" value="UniProtKB-UniRule"/>
</dbReference>
<dbReference type="GO" id="GO:0097510">
    <property type="term" value="P:base-excision repair, AP site formation via deaminated base removal"/>
    <property type="evidence" value="ECO:0007669"/>
    <property type="project" value="TreeGrafter"/>
</dbReference>
<dbReference type="CDD" id="cd10027">
    <property type="entry name" value="UDG-F1-like"/>
    <property type="match status" value="1"/>
</dbReference>
<dbReference type="FunFam" id="3.40.470.10:FF:000001">
    <property type="entry name" value="Uracil-DNA glycosylase"/>
    <property type="match status" value="1"/>
</dbReference>
<dbReference type="Gene3D" id="3.40.470.10">
    <property type="entry name" value="Uracil-DNA glycosylase-like domain"/>
    <property type="match status" value="1"/>
</dbReference>
<dbReference type="HAMAP" id="MF_00148">
    <property type="entry name" value="UDG"/>
    <property type="match status" value="1"/>
</dbReference>
<dbReference type="InterPro" id="IPR002043">
    <property type="entry name" value="UDG_fam1"/>
</dbReference>
<dbReference type="InterPro" id="IPR018085">
    <property type="entry name" value="Ura-DNA_Glyclase_AS"/>
</dbReference>
<dbReference type="InterPro" id="IPR005122">
    <property type="entry name" value="Uracil-DNA_glycosylase-like"/>
</dbReference>
<dbReference type="InterPro" id="IPR036895">
    <property type="entry name" value="Uracil-DNA_glycosylase-like_sf"/>
</dbReference>
<dbReference type="NCBIfam" id="NF003588">
    <property type="entry name" value="PRK05254.1-1"/>
    <property type="match status" value="1"/>
</dbReference>
<dbReference type="NCBIfam" id="NF003589">
    <property type="entry name" value="PRK05254.1-2"/>
    <property type="match status" value="1"/>
</dbReference>
<dbReference type="NCBIfam" id="NF003591">
    <property type="entry name" value="PRK05254.1-4"/>
    <property type="match status" value="1"/>
</dbReference>
<dbReference type="NCBIfam" id="NF003592">
    <property type="entry name" value="PRK05254.1-5"/>
    <property type="match status" value="1"/>
</dbReference>
<dbReference type="NCBIfam" id="TIGR00628">
    <property type="entry name" value="ung"/>
    <property type="match status" value="1"/>
</dbReference>
<dbReference type="PANTHER" id="PTHR11264">
    <property type="entry name" value="URACIL-DNA GLYCOSYLASE"/>
    <property type="match status" value="1"/>
</dbReference>
<dbReference type="PANTHER" id="PTHR11264:SF0">
    <property type="entry name" value="URACIL-DNA GLYCOSYLASE"/>
    <property type="match status" value="1"/>
</dbReference>
<dbReference type="Pfam" id="PF03167">
    <property type="entry name" value="UDG"/>
    <property type="match status" value="1"/>
</dbReference>
<dbReference type="SMART" id="SM00986">
    <property type="entry name" value="UDG"/>
    <property type="match status" value="1"/>
</dbReference>
<dbReference type="SMART" id="SM00987">
    <property type="entry name" value="UreE_C"/>
    <property type="match status" value="1"/>
</dbReference>
<dbReference type="SUPFAM" id="SSF52141">
    <property type="entry name" value="Uracil-DNA glycosylase-like"/>
    <property type="match status" value="1"/>
</dbReference>
<dbReference type="PROSITE" id="PS00130">
    <property type="entry name" value="U_DNA_GLYCOSYLASE"/>
    <property type="match status" value="1"/>
</dbReference>
<feature type="chain" id="PRO_1000199777" description="Uracil-DNA glycosylase">
    <location>
        <begin position="1"/>
        <end position="229"/>
    </location>
</feature>
<feature type="active site" description="Proton acceptor" evidence="1">
    <location>
        <position position="64"/>
    </location>
</feature>
<evidence type="ECO:0000255" key="1">
    <source>
        <dbReference type="HAMAP-Rule" id="MF_00148"/>
    </source>
</evidence>